<accession>D5CVJ7</accession>
<accession>D7RNS5</accession>
<organism>
    <name type="scientific">Escherichia coli O18:K1:H7 (strain IHE3034 / ExPEC)</name>
    <dbReference type="NCBI Taxonomy" id="714962"/>
    <lineage>
        <taxon>Bacteria</taxon>
        <taxon>Pseudomonadati</taxon>
        <taxon>Pseudomonadota</taxon>
        <taxon>Gammaproteobacteria</taxon>
        <taxon>Enterobacterales</taxon>
        <taxon>Enterobacteriaceae</taxon>
        <taxon>Escherichia</taxon>
    </lineage>
</organism>
<feature type="signal peptide" evidence="2">
    <location>
        <begin position="1"/>
        <end position="20"/>
    </location>
</feature>
<feature type="chain" id="PRO_0000429536" description="Fimbria adhesin EcpD">
    <location>
        <begin position="21"/>
        <end position="547"/>
    </location>
</feature>
<protein>
    <recommendedName>
        <fullName>Fimbria adhesin EcpD</fullName>
    </recommendedName>
    <alternativeName>
        <fullName>Meningitis associated and temperature regulated protein E</fullName>
    </alternativeName>
</protein>
<sequence>MRVNLLIAMIIFALIWPATALRAAVSKTTWADAPAREFVFVENNSDDNFFVTPGGALDPRLTGANRWTGLKYNGSGTIYQQSLGYIDNGYNTGLYTNWKFDMWLENSPVSSPLTGLRCINWYAGCNMTTSLILPQTTDASGFYGATVTSGGAKWMHGMLSDAFYQYLQQMPVGSSFTMTINACQTSVNYDANSGARCKDQASGNWYVRNVTHTKAANLRLINTHSLAEVFINSDGVPTLGEGNADCRTQTIGSRSGLSCKMVNYTLQTNGLSNTSIHIFPAIANSSLASAVGAYDMQFSLNGSSWKPVSNTAYYYTFNEMKSADSIYVFFSSNFFKQMVNLGISDINTKDLFNFRFQNTTSPESGWYEFSTSNTLIIKPRDFSISIISDEYTQTPSREGYVGSGESALDFGYIVTTSGKTAADEVLIKVTGPAQVIGGRSYCVFSSDDGKAKVPFPATLSFITRNGATKTYDAGCDDSWRDMTDALWLTTPWTDISGEVGQMDKTTVKFSIPMDNAISLRTVDDNGWFGEVSASGEIHVQATWRNIN</sequence>
<name>ECPD_ECOKI</name>
<dbReference type="EMBL" id="HM102365">
    <property type="protein sequence ID" value="ADI59491.1"/>
    <property type="molecule type" value="Genomic_DNA"/>
</dbReference>
<dbReference type="EMBL" id="CP001969">
    <property type="protein sequence ID" value="ADE92637.1"/>
    <property type="molecule type" value="Genomic_DNA"/>
</dbReference>
<dbReference type="RefSeq" id="WP_001265640.1">
    <property type="nucleotide sequence ID" value="NC_017628.1"/>
</dbReference>
<dbReference type="KEGG" id="eih:ECOK1_0277"/>
<dbReference type="PATRIC" id="fig|714962.3.peg.277"/>
<dbReference type="HOGENOM" id="CLU_039494_0_0_6"/>
<dbReference type="GO" id="GO:0009289">
    <property type="term" value="C:pilus"/>
    <property type="evidence" value="ECO:0007669"/>
    <property type="project" value="UniProtKB-SubCell"/>
</dbReference>
<proteinExistence type="inferred from homology"/>
<comment type="function">
    <text evidence="5">Part of the ecpRABCDE operon, which encodes the E.coli common pilus (ECP). ECP is found in both commensal and pathogenic strains and plays a dual role in early-stage biofilm development and host cell recognition. Tip pilus adhesin, which is required for assembly of EcpA into fibers (Probable).</text>
</comment>
<comment type="subunit">
    <text evidence="1">Forms polymers. Interacts with EcpA.</text>
</comment>
<comment type="subcellular location">
    <subcellularLocation>
        <location evidence="1">Fimbrium</location>
    </subcellularLocation>
</comment>
<comment type="induction">
    <text evidence="1">Negatively regulated by H-NS. Positively regulated by IHF and EcpR (By similarity).</text>
</comment>
<comment type="disruption phenotype">
    <text evidence="3">Mutants do not express ECP and are defective in biofilm formation.</text>
</comment>
<comment type="similarity">
    <text evidence="4">Belongs to the EcpD/MatE family.</text>
</comment>
<gene>
    <name type="primary">ecpD</name>
    <name type="synonym">matE</name>
    <name type="ordered locus">ECOK1_0277</name>
</gene>
<keyword id="KW-0281">Fimbrium</keyword>
<keyword id="KW-0732">Signal</keyword>
<evidence type="ECO:0000250" key="1"/>
<evidence type="ECO:0000255" key="2"/>
<evidence type="ECO:0000269" key="3">
    <source>
    </source>
</evidence>
<evidence type="ECO:0000305" key="4"/>
<evidence type="ECO:0000305" key="5">
    <source>
    </source>
</evidence>
<reference key="1">
    <citation type="journal article" date="2010" name="Microbiology">
        <title>Mat fimbriae promote biofilm formation by meningitis-associated Escherichia coli.</title>
        <authorList>
            <person name="Lehti T.A."/>
            <person name="Bauchart P."/>
            <person name="Heikkinen J."/>
            <person name="Hacker J."/>
            <person name="Korhonen T.K."/>
            <person name="Dobrindt U."/>
            <person name="Westerlund-Wikstrom B."/>
        </authorList>
    </citation>
    <scope>NUCLEOTIDE SEQUENCE [GENOMIC DNA]</scope>
    <scope>FUNCTION</scope>
    <scope>DISRUPTION PHENOTYPE</scope>
    <source>
        <strain>IHE3034 / ExPEC</strain>
    </source>
</reference>
<reference key="2">
    <citation type="journal article" date="2010" name="Proc. Natl. Acad. Sci. U.S.A.">
        <title>Identification of protective and broadly conserved vaccine antigens from the genome of extraintestinal pathogenic Escherichia coli.</title>
        <authorList>
            <person name="Moriel D.G."/>
            <person name="Bertoldi I."/>
            <person name="Spagnuolo A."/>
            <person name="Marchi S."/>
            <person name="Rosini R."/>
            <person name="Nesta B."/>
            <person name="Pastorello I."/>
            <person name="Corea V.A."/>
            <person name="Torricelli G."/>
            <person name="Cartocci E."/>
            <person name="Savino S."/>
            <person name="Scarselli M."/>
            <person name="Dobrindt U."/>
            <person name="Hacker J."/>
            <person name="Tettelin H."/>
            <person name="Tallon L.J."/>
            <person name="Sullivan S."/>
            <person name="Wieler L.H."/>
            <person name="Ewers C."/>
            <person name="Pickard D."/>
            <person name="Dougan G."/>
            <person name="Fontana M.R."/>
            <person name="Rappuoli R."/>
            <person name="Pizza M."/>
            <person name="Serino L."/>
        </authorList>
    </citation>
    <scope>NUCLEOTIDE SEQUENCE [LARGE SCALE GENOMIC DNA]</scope>
    <source>
        <strain>IHE3034 / ExPEC</strain>
    </source>
</reference>